<comment type="function">
    <text>Transcriptional activator; DNA-binding protein that specifically recognize the sequence 5'-YAAC[GT]G-3'. Plays an important role in the control of proliferation and differentiation of hematopoietic progenitor cells.</text>
</comment>
<comment type="subcellular location">
    <subcellularLocation>
        <location>Nucleus</location>
    </subcellularLocation>
</comment>
<comment type="domain">
    <text>Comprised of 3 domains; an N-terminal DNA-binding domain, a centrally located transcriptional activation domain and a C-terminal domain involved in transcriptional repression.</text>
</comment>
<protein>
    <recommendedName>
        <fullName>Transcriptional activator Myb</fullName>
    </recommendedName>
</protein>
<evidence type="ECO:0000250" key="1"/>
<evidence type="ECO:0000255" key="2">
    <source>
        <dbReference type="PROSITE-ProRule" id="PRU00625"/>
    </source>
</evidence>
<evidence type="ECO:0000256" key="3">
    <source>
        <dbReference type="SAM" id="MobiDB-lite"/>
    </source>
</evidence>
<name>MYB_XENLA</name>
<accession>Q08759</accession>
<sequence>MDRRPSQYSSEEEDDEIEMYEHDYDGLLSKGKRHLGKTRWTREEDEKLKKLVEQNGTEEWKVIASFLPNRTDVQCQHRWQKVLNPELIKGPWTKEEDQRVIELVHKYGPKRWSVIAKHLKGRIGKQCRERWHNHLNPEVKKSSWTEEEDRTIYEAHKRLGNRWAEIAKLLPGRTDNAIKNHWNSTMRRKEEQEGYLQNSSKTNQHTIVTNFPKSNHLMTFTHTRASAEHSQASTSSFPYYHIAEHQNASYPVALRVNIVNVPQLATAPVQRHYNDEDPEKEKRIKELELLLMSTENEINQKQELLNHTASYTTCHSTTIGGNPRLHGQSTPDSCLGDPHHSTPSPQVDHSCLPEESASPARYFGVNLLIQMKNLAEYSETQLIDSFLNTSTQHENLEMEHQSLTSTPICASQKNTITTSLLRDHALRLQKENHLLRTPAIKRSILNSTPRTPTPFKNALAAQEFKHGPLKLLHHTPLHLAEDIQEVIKQETDESGIVHDHCNTEEPLLKRIKQEVESPTHKVGNLYFSSYWEGESLNAQLFRQQSTLDDTSNSILTSSLLMKPVSEKEDHIFKSFPVQSIKSYTSPLQHLSGTWDVMSCSRMEDQKILAEQYCKYIKNFSTLVI</sequence>
<organism>
    <name type="scientific">Xenopus laevis</name>
    <name type="common">African clawed frog</name>
    <dbReference type="NCBI Taxonomy" id="8355"/>
    <lineage>
        <taxon>Eukaryota</taxon>
        <taxon>Metazoa</taxon>
        <taxon>Chordata</taxon>
        <taxon>Craniata</taxon>
        <taxon>Vertebrata</taxon>
        <taxon>Euteleostomi</taxon>
        <taxon>Amphibia</taxon>
        <taxon>Batrachia</taxon>
        <taxon>Anura</taxon>
        <taxon>Pipoidea</taxon>
        <taxon>Pipidae</taxon>
        <taxon>Xenopodinae</taxon>
        <taxon>Xenopus</taxon>
        <taxon>Xenopus</taxon>
    </lineage>
</organism>
<feature type="chain" id="PRO_0000197051" description="Transcriptional activator Myb">
    <location>
        <begin position="1"/>
        <end position="624"/>
    </location>
</feature>
<feature type="domain" description="HTH myb-type 1" evidence="2">
    <location>
        <begin position="32"/>
        <end position="83"/>
    </location>
</feature>
<feature type="domain" description="HTH myb-type 2" evidence="2">
    <location>
        <begin position="84"/>
        <end position="139"/>
    </location>
</feature>
<feature type="domain" description="HTH myb-type 3" evidence="2">
    <location>
        <begin position="140"/>
        <end position="190"/>
    </location>
</feature>
<feature type="DNA-binding region" description="H-T-H motif" evidence="2">
    <location>
        <begin position="60"/>
        <end position="83"/>
    </location>
</feature>
<feature type="DNA-binding region" description="H-T-H motif" evidence="2">
    <location>
        <begin position="112"/>
        <end position="135"/>
    </location>
</feature>
<feature type="DNA-binding region" description="H-T-H motif" evidence="2">
    <location>
        <begin position="163"/>
        <end position="186"/>
    </location>
</feature>
<feature type="region of interest" description="Transcriptional activation domain" evidence="1">
    <location>
        <begin position="264"/>
        <end position="314"/>
    </location>
</feature>
<feature type="region of interest" description="Negative regulatory domain" evidence="1">
    <location>
        <begin position="315"/>
        <end position="449"/>
    </location>
</feature>
<feature type="region of interest" description="Disordered" evidence="3">
    <location>
        <begin position="319"/>
        <end position="352"/>
    </location>
</feature>
<dbReference type="EMBL" id="L22741">
    <property type="protein sequence ID" value="AAC38011.1"/>
    <property type="molecule type" value="mRNA"/>
</dbReference>
<dbReference type="PIR" id="I51581">
    <property type="entry name" value="I51581"/>
</dbReference>
<dbReference type="RefSeq" id="NP_001081768.1">
    <property type="nucleotide sequence ID" value="NM_001088299.2"/>
</dbReference>
<dbReference type="SMR" id="Q08759"/>
<dbReference type="GeneID" id="398039"/>
<dbReference type="KEGG" id="xla:398039"/>
<dbReference type="AGR" id="Xenbase:XB-GENE-867566"/>
<dbReference type="CTD" id="398039"/>
<dbReference type="Xenbase" id="XB-GENE-867566">
    <property type="gene designation" value="myb.S"/>
</dbReference>
<dbReference type="OrthoDB" id="2143914at2759"/>
<dbReference type="Proteomes" id="UP000186698">
    <property type="component" value="Chromosome 5S"/>
</dbReference>
<dbReference type="Bgee" id="398039">
    <property type="expression patterns" value="Expressed in egg cell and 11 other cell types or tissues"/>
</dbReference>
<dbReference type="GO" id="GO:0005634">
    <property type="term" value="C:nucleus"/>
    <property type="evidence" value="ECO:0000318"/>
    <property type="project" value="GO_Central"/>
</dbReference>
<dbReference type="GO" id="GO:0000981">
    <property type="term" value="F:DNA-binding transcription factor activity, RNA polymerase II-specific"/>
    <property type="evidence" value="ECO:0000318"/>
    <property type="project" value="GO_Central"/>
</dbReference>
<dbReference type="GO" id="GO:0000978">
    <property type="term" value="F:RNA polymerase II cis-regulatory region sequence-specific DNA binding"/>
    <property type="evidence" value="ECO:0000318"/>
    <property type="project" value="GO_Central"/>
</dbReference>
<dbReference type="GO" id="GO:0000278">
    <property type="term" value="P:mitotic cell cycle"/>
    <property type="evidence" value="ECO:0000318"/>
    <property type="project" value="GO_Central"/>
</dbReference>
<dbReference type="GO" id="GO:0045944">
    <property type="term" value="P:positive regulation of transcription by RNA polymerase II"/>
    <property type="evidence" value="ECO:0000318"/>
    <property type="project" value="GO_Central"/>
</dbReference>
<dbReference type="CDD" id="cd00167">
    <property type="entry name" value="SANT"/>
    <property type="match status" value="3"/>
</dbReference>
<dbReference type="FunFam" id="1.10.10.60:FF:000010">
    <property type="entry name" value="Transcriptional activator Myb isoform A"/>
    <property type="match status" value="1"/>
</dbReference>
<dbReference type="FunFam" id="1.10.10.60:FF:000016">
    <property type="entry name" value="Transcriptional activator Myb isoform A"/>
    <property type="match status" value="1"/>
</dbReference>
<dbReference type="FunFam" id="1.10.10.60:FF:000042">
    <property type="entry name" value="Transcriptional activator Myb isoform A"/>
    <property type="match status" value="1"/>
</dbReference>
<dbReference type="Gene3D" id="1.10.10.60">
    <property type="entry name" value="Homeodomain-like"/>
    <property type="match status" value="3"/>
</dbReference>
<dbReference type="InterPro" id="IPR015395">
    <property type="entry name" value="C-myb_C"/>
</dbReference>
<dbReference type="InterPro" id="IPR009057">
    <property type="entry name" value="Homeodomain-like_sf"/>
</dbReference>
<dbReference type="InterPro" id="IPR017930">
    <property type="entry name" value="Myb_dom"/>
</dbReference>
<dbReference type="InterPro" id="IPR050560">
    <property type="entry name" value="MYB_TF"/>
</dbReference>
<dbReference type="InterPro" id="IPR001005">
    <property type="entry name" value="SANT/Myb"/>
</dbReference>
<dbReference type="InterPro" id="IPR012642">
    <property type="entry name" value="Tscrpt_reg_Wos2-domain"/>
</dbReference>
<dbReference type="PANTHER" id="PTHR45614">
    <property type="entry name" value="MYB PROTEIN-RELATED"/>
    <property type="match status" value="1"/>
</dbReference>
<dbReference type="Pfam" id="PF09316">
    <property type="entry name" value="Cmyb_C"/>
    <property type="match status" value="1"/>
</dbReference>
<dbReference type="Pfam" id="PF07988">
    <property type="entry name" value="LMSTEN"/>
    <property type="match status" value="1"/>
</dbReference>
<dbReference type="Pfam" id="PF00249">
    <property type="entry name" value="Myb_DNA-binding"/>
    <property type="match status" value="3"/>
</dbReference>
<dbReference type="SMART" id="SM00717">
    <property type="entry name" value="SANT"/>
    <property type="match status" value="3"/>
</dbReference>
<dbReference type="SUPFAM" id="SSF46689">
    <property type="entry name" value="Homeodomain-like"/>
    <property type="match status" value="2"/>
</dbReference>
<dbReference type="PROSITE" id="PS51294">
    <property type="entry name" value="HTH_MYB"/>
    <property type="match status" value="3"/>
</dbReference>
<proteinExistence type="evidence at transcript level"/>
<reference key="1">
    <citation type="journal article" date="1994" name="Oncogene">
        <title>Characterization and expression of the Xenopus c-Myb homolog.</title>
        <authorList>
            <person name="Amaravadi L."/>
            <person name="King M.W."/>
        </authorList>
    </citation>
    <scope>NUCLEOTIDE SEQUENCE [MRNA]</scope>
</reference>
<keyword id="KW-0010">Activator</keyword>
<keyword id="KW-0238">DNA-binding</keyword>
<keyword id="KW-0539">Nucleus</keyword>
<keyword id="KW-1185">Reference proteome</keyword>
<keyword id="KW-0677">Repeat</keyword>
<keyword id="KW-0804">Transcription</keyword>
<keyword id="KW-0805">Transcription regulation</keyword>
<gene>
    <name type="primary">myb</name>
</gene>